<accession>Q82DP1</accession>
<keyword id="KW-1185">Reference proteome</keyword>
<keyword id="KW-0687">Ribonucleoprotein</keyword>
<keyword id="KW-0689">Ribosomal protein</keyword>
<keyword id="KW-0694">RNA-binding</keyword>
<keyword id="KW-0699">rRNA-binding</keyword>
<evidence type="ECO:0000255" key="1">
    <source>
        <dbReference type="HAMAP-Rule" id="MF_00531"/>
    </source>
</evidence>
<evidence type="ECO:0000256" key="2">
    <source>
        <dbReference type="SAM" id="MobiDB-lite"/>
    </source>
</evidence>
<evidence type="ECO:0000305" key="3"/>
<proteinExistence type="inferred from homology"/>
<comment type="function">
    <text evidence="1">Protein S19 forms a complex with S13 that binds strongly to the 16S ribosomal RNA.</text>
</comment>
<comment type="similarity">
    <text evidence="1">Belongs to the universal ribosomal protein uS19 family.</text>
</comment>
<sequence length="93" mass="10543">MPRSLKKGPFVDDHLIKKVDAQNEAGSKNVIKTWSRRSMIIPAMLGHTIAVHNGKTHIPVFVTESMVGHKLGEFSPTRTFRGHVKDDRKSKRR</sequence>
<protein>
    <recommendedName>
        <fullName evidence="1">Small ribosomal subunit protein uS19</fullName>
    </recommendedName>
    <alternativeName>
        <fullName evidence="3">30S ribosomal protein S19</fullName>
    </alternativeName>
</protein>
<feature type="chain" id="PRO_0000129910" description="Small ribosomal subunit protein uS19">
    <location>
        <begin position="1"/>
        <end position="93"/>
    </location>
</feature>
<feature type="region of interest" description="Disordered" evidence="2">
    <location>
        <begin position="73"/>
        <end position="93"/>
    </location>
</feature>
<feature type="compositionally biased region" description="Basic and acidic residues" evidence="2">
    <location>
        <begin position="83"/>
        <end position="93"/>
    </location>
</feature>
<gene>
    <name evidence="1" type="primary">rpsS</name>
    <name type="ordered locus">SAV_4930</name>
</gene>
<organism>
    <name type="scientific">Streptomyces avermitilis (strain ATCC 31267 / DSM 46492 / JCM 5070 / NBRC 14893 / NCIMB 12804 / NRRL 8165 / MA-4680)</name>
    <dbReference type="NCBI Taxonomy" id="227882"/>
    <lineage>
        <taxon>Bacteria</taxon>
        <taxon>Bacillati</taxon>
        <taxon>Actinomycetota</taxon>
        <taxon>Actinomycetes</taxon>
        <taxon>Kitasatosporales</taxon>
        <taxon>Streptomycetaceae</taxon>
        <taxon>Streptomyces</taxon>
    </lineage>
</organism>
<name>RS19_STRAW</name>
<dbReference type="EMBL" id="BA000030">
    <property type="protein sequence ID" value="BAC72642.1"/>
    <property type="molecule type" value="Genomic_DNA"/>
</dbReference>
<dbReference type="RefSeq" id="WP_010986346.1">
    <property type="nucleotide sequence ID" value="NZ_JZJK01000077.1"/>
</dbReference>
<dbReference type="SMR" id="Q82DP1"/>
<dbReference type="GeneID" id="41542013"/>
<dbReference type="KEGG" id="sma:SAVERM_4930"/>
<dbReference type="eggNOG" id="COG0185">
    <property type="taxonomic scope" value="Bacteria"/>
</dbReference>
<dbReference type="HOGENOM" id="CLU_144911_0_1_11"/>
<dbReference type="OrthoDB" id="9797833at2"/>
<dbReference type="Proteomes" id="UP000000428">
    <property type="component" value="Chromosome"/>
</dbReference>
<dbReference type="GO" id="GO:0005737">
    <property type="term" value="C:cytoplasm"/>
    <property type="evidence" value="ECO:0007669"/>
    <property type="project" value="UniProtKB-ARBA"/>
</dbReference>
<dbReference type="GO" id="GO:0015935">
    <property type="term" value="C:small ribosomal subunit"/>
    <property type="evidence" value="ECO:0007669"/>
    <property type="project" value="InterPro"/>
</dbReference>
<dbReference type="GO" id="GO:0019843">
    <property type="term" value="F:rRNA binding"/>
    <property type="evidence" value="ECO:0007669"/>
    <property type="project" value="UniProtKB-UniRule"/>
</dbReference>
<dbReference type="GO" id="GO:0003735">
    <property type="term" value="F:structural constituent of ribosome"/>
    <property type="evidence" value="ECO:0007669"/>
    <property type="project" value="InterPro"/>
</dbReference>
<dbReference type="GO" id="GO:0000028">
    <property type="term" value="P:ribosomal small subunit assembly"/>
    <property type="evidence" value="ECO:0007669"/>
    <property type="project" value="TreeGrafter"/>
</dbReference>
<dbReference type="GO" id="GO:0006412">
    <property type="term" value="P:translation"/>
    <property type="evidence" value="ECO:0007669"/>
    <property type="project" value="UniProtKB-UniRule"/>
</dbReference>
<dbReference type="FunFam" id="3.30.860.10:FF:000001">
    <property type="entry name" value="30S ribosomal protein S19"/>
    <property type="match status" value="1"/>
</dbReference>
<dbReference type="Gene3D" id="3.30.860.10">
    <property type="entry name" value="30s Ribosomal Protein S19, Chain A"/>
    <property type="match status" value="1"/>
</dbReference>
<dbReference type="HAMAP" id="MF_00531">
    <property type="entry name" value="Ribosomal_uS19"/>
    <property type="match status" value="1"/>
</dbReference>
<dbReference type="InterPro" id="IPR002222">
    <property type="entry name" value="Ribosomal_uS19"/>
</dbReference>
<dbReference type="InterPro" id="IPR005732">
    <property type="entry name" value="Ribosomal_uS19_bac-type"/>
</dbReference>
<dbReference type="InterPro" id="IPR020934">
    <property type="entry name" value="Ribosomal_uS19_CS"/>
</dbReference>
<dbReference type="InterPro" id="IPR023575">
    <property type="entry name" value="Ribosomal_uS19_SF"/>
</dbReference>
<dbReference type="NCBIfam" id="TIGR01050">
    <property type="entry name" value="rpsS_bact"/>
    <property type="match status" value="1"/>
</dbReference>
<dbReference type="PANTHER" id="PTHR11880">
    <property type="entry name" value="RIBOSOMAL PROTEIN S19P FAMILY MEMBER"/>
    <property type="match status" value="1"/>
</dbReference>
<dbReference type="PANTHER" id="PTHR11880:SF8">
    <property type="entry name" value="SMALL RIBOSOMAL SUBUNIT PROTEIN US19M"/>
    <property type="match status" value="1"/>
</dbReference>
<dbReference type="Pfam" id="PF00203">
    <property type="entry name" value="Ribosomal_S19"/>
    <property type="match status" value="1"/>
</dbReference>
<dbReference type="PIRSF" id="PIRSF002144">
    <property type="entry name" value="Ribosomal_S19"/>
    <property type="match status" value="1"/>
</dbReference>
<dbReference type="PRINTS" id="PR00975">
    <property type="entry name" value="RIBOSOMALS19"/>
</dbReference>
<dbReference type="SUPFAM" id="SSF54570">
    <property type="entry name" value="Ribosomal protein S19"/>
    <property type="match status" value="1"/>
</dbReference>
<dbReference type="PROSITE" id="PS00323">
    <property type="entry name" value="RIBOSOMAL_S19"/>
    <property type="match status" value="1"/>
</dbReference>
<reference key="1">
    <citation type="journal article" date="2001" name="Proc. Natl. Acad. Sci. U.S.A.">
        <title>Genome sequence of an industrial microorganism Streptomyces avermitilis: deducing the ability of producing secondary metabolites.</title>
        <authorList>
            <person name="Omura S."/>
            <person name="Ikeda H."/>
            <person name="Ishikawa J."/>
            <person name="Hanamoto A."/>
            <person name="Takahashi C."/>
            <person name="Shinose M."/>
            <person name="Takahashi Y."/>
            <person name="Horikawa H."/>
            <person name="Nakazawa H."/>
            <person name="Osonoe T."/>
            <person name="Kikuchi H."/>
            <person name="Shiba T."/>
            <person name="Sakaki Y."/>
            <person name="Hattori M."/>
        </authorList>
    </citation>
    <scope>NUCLEOTIDE SEQUENCE [LARGE SCALE GENOMIC DNA]</scope>
    <source>
        <strain>ATCC 31267 / DSM 46492 / JCM 5070 / NBRC 14893 / NCIMB 12804 / NRRL 8165 / MA-4680</strain>
    </source>
</reference>
<reference key="2">
    <citation type="journal article" date="2003" name="Nat. Biotechnol.">
        <title>Complete genome sequence and comparative analysis of the industrial microorganism Streptomyces avermitilis.</title>
        <authorList>
            <person name="Ikeda H."/>
            <person name="Ishikawa J."/>
            <person name="Hanamoto A."/>
            <person name="Shinose M."/>
            <person name="Kikuchi H."/>
            <person name="Shiba T."/>
            <person name="Sakaki Y."/>
            <person name="Hattori M."/>
            <person name="Omura S."/>
        </authorList>
    </citation>
    <scope>NUCLEOTIDE SEQUENCE [LARGE SCALE GENOMIC DNA]</scope>
    <source>
        <strain>ATCC 31267 / DSM 46492 / JCM 5070 / NBRC 14893 / NCIMB 12804 / NRRL 8165 / MA-4680</strain>
    </source>
</reference>